<comment type="function">
    <text evidence="1">Part of the ABC transporter complex RbsABC involved in ribose import. Responsible for energy coupling to the transport system.</text>
</comment>
<comment type="catalytic activity">
    <reaction evidence="1">
        <text>D-ribose(out) + ATP + H2O = D-ribose(in) + ADP + phosphate + H(+)</text>
        <dbReference type="Rhea" id="RHEA:29903"/>
        <dbReference type="ChEBI" id="CHEBI:15377"/>
        <dbReference type="ChEBI" id="CHEBI:15378"/>
        <dbReference type="ChEBI" id="CHEBI:30616"/>
        <dbReference type="ChEBI" id="CHEBI:43474"/>
        <dbReference type="ChEBI" id="CHEBI:47013"/>
        <dbReference type="ChEBI" id="CHEBI:456216"/>
        <dbReference type="EC" id="7.5.2.7"/>
    </reaction>
</comment>
<comment type="subunit">
    <text evidence="1">The complex is composed of an ATP-binding protein (RbsA), two transmembrane proteins (RbsC) and a solute-binding protein (RbsB).</text>
</comment>
<comment type="subcellular location">
    <subcellularLocation>
        <location evidence="1">Cell inner membrane</location>
        <topology evidence="1">Peripheral membrane protein</topology>
    </subcellularLocation>
</comment>
<comment type="similarity">
    <text evidence="1">Belongs to the ABC transporter superfamily. Ribose importer (TC 3.A.1.2.1) family.</text>
</comment>
<accession>Q3JHZ1</accession>
<reference key="1">
    <citation type="journal article" date="2010" name="Genome Biol. Evol.">
        <title>Continuing evolution of Burkholderia mallei through genome reduction and large-scale rearrangements.</title>
        <authorList>
            <person name="Losada L."/>
            <person name="Ronning C.M."/>
            <person name="DeShazer D."/>
            <person name="Woods D."/>
            <person name="Fedorova N."/>
            <person name="Kim H.S."/>
            <person name="Shabalina S.A."/>
            <person name="Pearson T.R."/>
            <person name="Brinkac L."/>
            <person name="Tan P."/>
            <person name="Nandi T."/>
            <person name="Crabtree J."/>
            <person name="Badger J."/>
            <person name="Beckstrom-Sternberg S."/>
            <person name="Saqib M."/>
            <person name="Schutzer S.E."/>
            <person name="Keim P."/>
            <person name="Nierman W.C."/>
        </authorList>
    </citation>
    <scope>NUCLEOTIDE SEQUENCE [LARGE SCALE GENOMIC DNA]</scope>
    <source>
        <strain>1710b</strain>
    </source>
</reference>
<evidence type="ECO:0000255" key="1">
    <source>
        <dbReference type="HAMAP-Rule" id="MF_01716"/>
    </source>
</evidence>
<proteinExistence type="inferred from homology"/>
<protein>
    <recommendedName>
        <fullName evidence="1">Ribose import ATP-binding protein RbsA 2</fullName>
        <ecNumber evidence="1">7.5.2.7</ecNumber>
    </recommendedName>
</protein>
<organism>
    <name type="scientific">Burkholderia pseudomallei (strain 1710b)</name>
    <dbReference type="NCBI Taxonomy" id="320372"/>
    <lineage>
        <taxon>Bacteria</taxon>
        <taxon>Pseudomonadati</taxon>
        <taxon>Pseudomonadota</taxon>
        <taxon>Betaproteobacteria</taxon>
        <taxon>Burkholderiales</taxon>
        <taxon>Burkholderiaceae</taxon>
        <taxon>Burkholderia</taxon>
        <taxon>pseudomallei group</taxon>
    </lineage>
</organism>
<keyword id="KW-0067">ATP-binding</keyword>
<keyword id="KW-0997">Cell inner membrane</keyword>
<keyword id="KW-1003">Cell membrane</keyword>
<keyword id="KW-0472">Membrane</keyword>
<keyword id="KW-0547">Nucleotide-binding</keyword>
<keyword id="KW-0677">Repeat</keyword>
<keyword id="KW-0762">Sugar transport</keyword>
<keyword id="KW-1278">Translocase</keyword>
<keyword id="KW-0813">Transport</keyword>
<feature type="chain" id="PRO_0000261049" description="Ribose import ATP-binding protein RbsA 2">
    <location>
        <begin position="1"/>
        <end position="517"/>
    </location>
</feature>
<feature type="domain" description="ABC transporter 1" evidence="1">
    <location>
        <begin position="11"/>
        <end position="251"/>
    </location>
</feature>
<feature type="domain" description="ABC transporter 2" evidence="1">
    <location>
        <begin position="263"/>
        <end position="507"/>
    </location>
</feature>
<feature type="binding site" evidence="1">
    <location>
        <begin position="43"/>
        <end position="50"/>
    </location>
    <ligand>
        <name>ATP</name>
        <dbReference type="ChEBI" id="CHEBI:30616"/>
    </ligand>
</feature>
<gene>
    <name evidence="1" type="primary">rbsA2</name>
    <name type="ordered locus">BURPS1710b_A1655</name>
</gene>
<dbReference type="EC" id="7.5.2.7" evidence="1"/>
<dbReference type="EMBL" id="CP000125">
    <property type="protein sequence ID" value="ABA51846.1"/>
    <property type="molecule type" value="Genomic_DNA"/>
</dbReference>
<dbReference type="RefSeq" id="WP_004537694.1">
    <property type="nucleotide sequence ID" value="NC_007435.1"/>
</dbReference>
<dbReference type="SMR" id="Q3JHZ1"/>
<dbReference type="EnsemblBacteria" id="ABA51846">
    <property type="protein sequence ID" value="ABA51846"/>
    <property type="gene ID" value="BURPS1710b_A1655"/>
</dbReference>
<dbReference type="KEGG" id="bpm:BURPS1710b_A1655"/>
<dbReference type="HOGENOM" id="CLU_000604_92_3_4"/>
<dbReference type="Proteomes" id="UP000002700">
    <property type="component" value="Chromosome II"/>
</dbReference>
<dbReference type="GO" id="GO:0005886">
    <property type="term" value="C:plasma membrane"/>
    <property type="evidence" value="ECO:0007669"/>
    <property type="project" value="UniProtKB-SubCell"/>
</dbReference>
<dbReference type="GO" id="GO:0015611">
    <property type="term" value="F:ABC-type D-ribose transporter activity"/>
    <property type="evidence" value="ECO:0007669"/>
    <property type="project" value="UniProtKB-EC"/>
</dbReference>
<dbReference type="GO" id="GO:0005524">
    <property type="term" value="F:ATP binding"/>
    <property type="evidence" value="ECO:0007669"/>
    <property type="project" value="UniProtKB-KW"/>
</dbReference>
<dbReference type="GO" id="GO:0016887">
    <property type="term" value="F:ATP hydrolysis activity"/>
    <property type="evidence" value="ECO:0007669"/>
    <property type="project" value="InterPro"/>
</dbReference>
<dbReference type="CDD" id="cd03216">
    <property type="entry name" value="ABC_Carb_Monos_I"/>
    <property type="match status" value="1"/>
</dbReference>
<dbReference type="CDD" id="cd03215">
    <property type="entry name" value="ABC_Carb_Monos_II"/>
    <property type="match status" value="1"/>
</dbReference>
<dbReference type="FunFam" id="3.40.50.300:FF:000127">
    <property type="entry name" value="Ribose import ATP-binding protein RbsA"/>
    <property type="match status" value="1"/>
</dbReference>
<dbReference type="Gene3D" id="3.40.50.300">
    <property type="entry name" value="P-loop containing nucleotide triphosphate hydrolases"/>
    <property type="match status" value="2"/>
</dbReference>
<dbReference type="InterPro" id="IPR003593">
    <property type="entry name" value="AAA+_ATPase"/>
</dbReference>
<dbReference type="InterPro" id="IPR050107">
    <property type="entry name" value="ABC_carbohydrate_import_ATPase"/>
</dbReference>
<dbReference type="InterPro" id="IPR003439">
    <property type="entry name" value="ABC_transporter-like_ATP-bd"/>
</dbReference>
<dbReference type="InterPro" id="IPR017871">
    <property type="entry name" value="ABC_transporter-like_CS"/>
</dbReference>
<dbReference type="InterPro" id="IPR027417">
    <property type="entry name" value="P-loop_NTPase"/>
</dbReference>
<dbReference type="PANTHER" id="PTHR43790">
    <property type="entry name" value="CARBOHYDRATE TRANSPORT ATP-BINDING PROTEIN MG119-RELATED"/>
    <property type="match status" value="1"/>
</dbReference>
<dbReference type="PANTHER" id="PTHR43790:SF3">
    <property type="entry name" value="D-ALLOSE IMPORT ATP-BINDING PROTEIN ALSA-RELATED"/>
    <property type="match status" value="1"/>
</dbReference>
<dbReference type="Pfam" id="PF00005">
    <property type="entry name" value="ABC_tran"/>
    <property type="match status" value="2"/>
</dbReference>
<dbReference type="SMART" id="SM00382">
    <property type="entry name" value="AAA"/>
    <property type="match status" value="2"/>
</dbReference>
<dbReference type="SUPFAM" id="SSF52540">
    <property type="entry name" value="P-loop containing nucleoside triphosphate hydrolases"/>
    <property type="match status" value="2"/>
</dbReference>
<dbReference type="PROSITE" id="PS00211">
    <property type="entry name" value="ABC_TRANSPORTER_1"/>
    <property type="match status" value="1"/>
</dbReference>
<dbReference type="PROSITE" id="PS50893">
    <property type="entry name" value="ABC_TRANSPORTER_2"/>
    <property type="match status" value="2"/>
</dbReference>
<dbReference type="PROSITE" id="PS51254">
    <property type="entry name" value="RBSA"/>
    <property type="match status" value="1"/>
</dbReference>
<sequence>MQRSDPPRPLLEMRGISKTFPAVRALAGVSLTVHPGEVHSLMGENGAGKSTLMKILSGAYQADPGGEILIDGRPISIDGPLAAREAGVAVIYQELCLAPNLSVAENIHVGRELRRGNGRRGTIDRAAMARGCQDVLERLGADFGPNTLVGTLSIAEQQLVEIARAVHTRARILVMDEPTTPLSSRETDNLFRLIRQLRAEGLAIIYISHRMAEIYELSDRVSVLRDGAYVGTLERDALSAERLVGMMVGRDISGFYKKAHAPYDPGNLLLSVRDIADGARVRGCSLDLHAGEVLGIAGLVGAGRTELARLIFGAEPRVRGEVTLAGKAFAAHSPREAIDAGLVYLTEDRKRQGLFLDMSVRENINISVCGRDARLGALDLARGAQRARDAIAALSIRVPHANVNVGALSGGNQQKVLLSRLLETKPRVLILDEPTRGVDIGAKSEIYRIINELARAGVGVIVISSELPEIIGVADRVLVMREGRIAGELGGRTDAPITQEAIIALATGSRTEASAAH</sequence>
<name>RBSA2_BURP1</name>